<accession>A5VFP1</accession>
<name>AROC_RHIWR</name>
<comment type="function">
    <text evidence="1">Catalyzes the anti-1,4-elimination of the C-3 phosphate and the C-6 proR hydrogen from 5-enolpyruvylshikimate-3-phosphate (EPSP) to yield chorismate, which is the branch point compound that serves as the starting substrate for the three terminal pathways of aromatic amino acid biosynthesis. This reaction introduces a second double bond into the aromatic ring system.</text>
</comment>
<comment type="catalytic activity">
    <reaction evidence="1">
        <text>5-O-(1-carboxyvinyl)-3-phosphoshikimate = chorismate + phosphate</text>
        <dbReference type="Rhea" id="RHEA:21020"/>
        <dbReference type="ChEBI" id="CHEBI:29748"/>
        <dbReference type="ChEBI" id="CHEBI:43474"/>
        <dbReference type="ChEBI" id="CHEBI:57701"/>
        <dbReference type="EC" id="4.2.3.5"/>
    </reaction>
</comment>
<comment type="cofactor">
    <cofactor evidence="1">
        <name>FMNH2</name>
        <dbReference type="ChEBI" id="CHEBI:57618"/>
    </cofactor>
    <text evidence="1">Reduced FMN (FMNH(2)).</text>
</comment>
<comment type="pathway">
    <text evidence="1">Metabolic intermediate biosynthesis; chorismate biosynthesis; chorismate from D-erythrose 4-phosphate and phosphoenolpyruvate: step 7/7.</text>
</comment>
<comment type="subunit">
    <text evidence="1">Homotetramer.</text>
</comment>
<comment type="similarity">
    <text evidence="1">Belongs to the chorismate synthase family.</text>
</comment>
<dbReference type="EC" id="4.2.3.5" evidence="1"/>
<dbReference type="EMBL" id="CP000699">
    <property type="protein sequence ID" value="ABQ71107.1"/>
    <property type="molecule type" value="Genomic_DNA"/>
</dbReference>
<dbReference type="SMR" id="A5VFP1"/>
<dbReference type="STRING" id="392499.Swit_4770"/>
<dbReference type="PaxDb" id="392499-Swit_4770"/>
<dbReference type="KEGG" id="swi:Swit_4770"/>
<dbReference type="eggNOG" id="COG0082">
    <property type="taxonomic scope" value="Bacteria"/>
</dbReference>
<dbReference type="HOGENOM" id="CLU_034547_0_0_5"/>
<dbReference type="OrthoDB" id="9771806at2"/>
<dbReference type="UniPathway" id="UPA00053">
    <property type="reaction ID" value="UER00090"/>
</dbReference>
<dbReference type="Proteomes" id="UP000001989">
    <property type="component" value="Chromosome"/>
</dbReference>
<dbReference type="GO" id="GO:0005829">
    <property type="term" value="C:cytosol"/>
    <property type="evidence" value="ECO:0007669"/>
    <property type="project" value="TreeGrafter"/>
</dbReference>
<dbReference type="GO" id="GO:0004107">
    <property type="term" value="F:chorismate synthase activity"/>
    <property type="evidence" value="ECO:0007669"/>
    <property type="project" value="UniProtKB-UniRule"/>
</dbReference>
<dbReference type="GO" id="GO:0010181">
    <property type="term" value="F:FMN binding"/>
    <property type="evidence" value="ECO:0007669"/>
    <property type="project" value="TreeGrafter"/>
</dbReference>
<dbReference type="GO" id="GO:0008652">
    <property type="term" value="P:amino acid biosynthetic process"/>
    <property type="evidence" value="ECO:0007669"/>
    <property type="project" value="UniProtKB-KW"/>
</dbReference>
<dbReference type="GO" id="GO:0009073">
    <property type="term" value="P:aromatic amino acid family biosynthetic process"/>
    <property type="evidence" value="ECO:0007669"/>
    <property type="project" value="UniProtKB-KW"/>
</dbReference>
<dbReference type="GO" id="GO:0009423">
    <property type="term" value="P:chorismate biosynthetic process"/>
    <property type="evidence" value="ECO:0007669"/>
    <property type="project" value="UniProtKB-UniRule"/>
</dbReference>
<dbReference type="CDD" id="cd07304">
    <property type="entry name" value="Chorismate_synthase"/>
    <property type="match status" value="1"/>
</dbReference>
<dbReference type="Gene3D" id="3.60.150.10">
    <property type="entry name" value="Chorismate synthase AroC"/>
    <property type="match status" value="1"/>
</dbReference>
<dbReference type="HAMAP" id="MF_00300">
    <property type="entry name" value="Chorismate_synth"/>
    <property type="match status" value="1"/>
</dbReference>
<dbReference type="InterPro" id="IPR000453">
    <property type="entry name" value="Chorismate_synth"/>
</dbReference>
<dbReference type="InterPro" id="IPR035904">
    <property type="entry name" value="Chorismate_synth_AroC_sf"/>
</dbReference>
<dbReference type="InterPro" id="IPR020541">
    <property type="entry name" value="Chorismate_synthase_CS"/>
</dbReference>
<dbReference type="NCBIfam" id="TIGR00033">
    <property type="entry name" value="aroC"/>
    <property type="match status" value="1"/>
</dbReference>
<dbReference type="NCBIfam" id="NF003793">
    <property type="entry name" value="PRK05382.1"/>
    <property type="match status" value="1"/>
</dbReference>
<dbReference type="PANTHER" id="PTHR21085">
    <property type="entry name" value="CHORISMATE SYNTHASE"/>
    <property type="match status" value="1"/>
</dbReference>
<dbReference type="PANTHER" id="PTHR21085:SF0">
    <property type="entry name" value="CHORISMATE SYNTHASE"/>
    <property type="match status" value="1"/>
</dbReference>
<dbReference type="Pfam" id="PF01264">
    <property type="entry name" value="Chorismate_synt"/>
    <property type="match status" value="1"/>
</dbReference>
<dbReference type="PIRSF" id="PIRSF001456">
    <property type="entry name" value="Chorismate_synth"/>
    <property type="match status" value="1"/>
</dbReference>
<dbReference type="SUPFAM" id="SSF103263">
    <property type="entry name" value="Chorismate synthase, AroC"/>
    <property type="match status" value="1"/>
</dbReference>
<dbReference type="PROSITE" id="PS00787">
    <property type="entry name" value="CHORISMATE_SYNTHASE_1"/>
    <property type="match status" value="1"/>
</dbReference>
<dbReference type="PROSITE" id="PS00788">
    <property type="entry name" value="CHORISMATE_SYNTHASE_2"/>
    <property type="match status" value="1"/>
</dbReference>
<dbReference type="PROSITE" id="PS00789">
    <property type="entry name" value="CHORISMATE_SYNTHASE_3"/>
    <property type="match status" value="1"/>
</dbReference>
<protein>
    <recommendedName>
        <fullName evidence="1">Chorismate synthase</fullName>
        <shortName evidence="1">CS</shortName>
        <ecNumber evidence="1">4.2.3.5</ecNumber>
    </recommendedName>
    <alternativeName>
        <fullName evidence="1">5-enolpyruvylshikimate-3-phosphate phospholyase</fullName>
    </alternativeName>
</protein>
<organism>
    <name type="scientific">Rhizorhabdus wittichii (strain DSM 6014 / CCUG 31198 / JCM 15750 / NBRC 105917 / EY 4224 / RW1)</name>
    <name type="common">Sphingomonas wittichii</name>
    <dbReference type="NCBI Taxonomy" id="392499"/>
    <lineage>
        <taxon>Bacteria</taxon>
        <taxon>Pseudomonadati</taxon>
        <taxon>Pseudomonadota</taxon>
        <taxon>Alphaproteobacteria</taxon>
        <taxon>Sphingomonadales</taxon>
        <taxon>Sphingomonadaceae</taxon>
        <taxon>Rhizorhabdus</taxon>
    </lineage>
</organism>
<keyword id="KW-0028">Amino-acid biosynthesis</keyword>
<keyword id="KW-0057">Aromatic amino acid biosynthesis</keyword>
<keyword id="KW-0274">FAD</keyword>
<keyword id="KW-0285">Flavoprotein</keyword>
<keyword id="KW-0288">FMN</keyword>
<keyword id="KW-0456">Lyase</keyword>
<keyword id="KW-0521">NADP</keyword>
<keyword id="KW-1185">Reference proteome</keyword>
<sequence length="356" mass="37659">MSFNSFGRVFRFSTWGESHGPAIGAVVDGCPPGLELSEADIQPWLDKRRPGTSRFTTQRQEPDQVRILSGVFEGRTTGTPISLMIDNVDQRSKDYSEVALAYRPGHADYAYDAKYGFRDHRGGGRSSARETASRVAAGAVARLVIPEVRIRAYLIELGGDRIDPAAFDDAAIDENPFFCPDRAAAARWEAIVDDARKAGSSVGAVVECVAEGVPAGWGAPLYAKLDSELAAACMSINAVKGVEIGDGFAAARLTGETNADPMRPGNDGKPVFLANHAGGIAGGIATGQPVVVRIALKPTSSILTPVETIGRDGKAADIRTKGRHDPCVGIRAAPVLEAMVALVLADQKLLHRAQIG</sequence>
<reference key="1">
    <citation type="journal article" date="2010" name="J. Bacteriol.">
        <title>Genome sequence of the dioxin-mineralizing bacterium Sphingomonas wittichii RW1.</title>
        <authorList>
            <person name="Miller T.R."/>
            <person name="Delcher A.L."/>
            <person name="Salzberg S.L."/>
            <person name="Saunders E."/>
            <person name="Detter J.C."/>
            <person name="Halden R.U."/>
        </authorList>
    </citation>
    <scope>NUCLEOTIDE SEQUENCE [LARGE SCALE GENOMIC DNA]</scope>
    <source>
        <strain>DSM 6014 / CCUG 31198 / JCM 15750 / NBRC 105917 / EY 4224 / RW1</strain>
    </source>
</reference>
<proteinExistence type="inferred from homology"/>
<evidence type="ECO:0000255" key="1">
    <source>
        <dbReference type="HAMAP-Rule" id="MF_00300"/>
    </source>
</evidence>
<feature type="chain" id="PRO_1000022558" description="Chorismate synthase">
    <location>
        <begin position="1"/>
        <end position="356"/>
    </location>
</feature>
<feature type="binding site" evidence="1">
    <location>
        <position position="48"/>
    </location>
    <ligand>
        <name>NADP(+)</name>
        <dbReference type="ChEBI" id="CHEBI:58349"/>
    </ligand>
</feature>
<feature type="binding site" evidence="1">
    <location>
        <position position="54"/>
    </location>
    <ligand>
        <name>NADP(+)</name>
        <dbReference type="ChEBI" id="CHEBI:58349"/>
    </ligand>
</feature>
<feature type="binding site" evidence="1">
    <location>
        <begin position="125"/>
        <end position="127"/>
    </location>
    <ligand>
        <name>FMN</name>
        <dbReference type="ChEBI" id="CHEBI:58210"/>
    </ligand>
</feature>
<feature type="binding site" evidence="1">
    <location>
        <begin position="237"/>
        <end position="238"/>
    </location>
    <ligand>
        <name>FMN</name>
        <dbReference type="ChEBI" id="CHEBI:58210"/>
    </ligand>
</feature>
<feature type="binding site" evidence="1">
    <location>
        <position position="282"/>
    </location>
    <ligand>
        <name>FMN</name>
        <dbReference type="ChEBI" id="CHEBI:58210"/>
    </ligand>
</feature>
<feature type="binding site" evidence="1">
    <location>
        <begin position="297"/>
        <end position="301"/>
    </location>
    <ligand>
        <name>FMN</name>
        <dbReference type="ChEBI" id="CHEBI:58210"/>
    </ligand>
</feature>
<feature type="binding site" evidence="1">
    <location>
        <position position="323"/>
    </location>
    <ligand>
        <name>FMN</name>
        <dbReference type="ChEBI" id="CHEBI:58210"/>
    </ligand>
</feature>
<gene>
    <name evidence="1" type="primary">aroC</name>
    <name type="ordered locus">Swit_4770</name>
</gene>